<evidence type="ECO:0000250" key="1"/>
<evidence type="ECO:0000250" key="2">
    <source>
        <dbReference type="UniProtKB" id="Q15465"/>
    </source>
</evidence>
<evidence type="ECO:0000305" key="3"/>
<organism>
    <name type="scientific">Danio aff. tweediei</name>
    <dbReference type="NCBI Taxonomy" id="46785"/>
    <lineage>
        <taxon>Eukaryota</taxon>
        <taxon>Metazoa</taxon>
        <taxon>Chordata</taxon>
        <taxon>Craniata</taxon>
        <taxon>Vertebrata</taxon>
        <taxon>Euteleostomi</taxon>
        <taxon>Actinopterygii</taxon>
        <taxon>Neopterygii</taxon>
        <taxon>Teleostei</taxon>
        <taxon>Ostariophysi</taxon>
        <taxon>Cypriniformes</taxon>
        <taxon>Danionidae</taxon>
        <taxon>Danioninae</taxon>
        <taxon>Danio</taxon>
    </lineage>
</organism>
<comment type="function">
    <text evidence="1">Intercellular signal essential for a variety of patterning events during development. Signal produced by the notochord that induces somite patterning, dorso-ventral patterning of the brain and early patterning of the developing eyes. Displays floor plate-inducing activity. Binds to the patched (PTC) receptor, which functions in association with smoothened (SMO), to activate the transcription of target genes. In the absence of SHH, PTC represses the constitutive signaling activity of SMO (By similarity).</text>
</comment>
<comment type="subunit">
    <text evidence="1">N-product is active as a multimer.</text>
</comment>
<comment type="subcellular location">
    <subcellularLocation>
        <location evidence="1">Secreted</location>
    </subcellularLocation>
    <subcellularLocation>
        <location evidence="1">Cell membrane</location>
    </subcellularLocation>
    <text evidence="1">Sonic hedgehog protein C-product: Secreted, extracellular space. Sonic hedgehog protein N-product: Cell membrane; Lipid-anchor. The C-terminal peptide diffuses from the cell, while the N-product either remains associated with lipid rafts at the cell surface, or forms freely diffusible active multimers with its hydrophobic lipid-modified N- and C-termini buried inside.</text>
</comment>
<comment type="domain">
    <text evidence="1">The sonic hedgehog protein N-product binds calcium and zinc ions; this stabilizes the protein fold and is essential for protein-protein interactions mediated by this domain.</text>
</comment>
<comment type="PTM">
    <text>The C-terminal domain displays an autoproteolysis activity and a cholesterol transferase activity. Both activities result in the cleavage of the full-length protein and covalent attachment of a cholesterol moiety to the C-terminal of the newly generated N-terminal fragment (N-product). The N-product is the active species in both local and long-range signaling, whereas the C-product has no signaling activity.</text>
</comment>
<comment type="PTM">
    <text evidence="1">Cholesterylation is required for N-product targeting to lipid rafts and multimerization.</text>
</comment>
<comment type="PTM">
    <text evidence="1">N-palmitoylation is required for N-product multimerization and full activity.</text>
</comment>
<comment type="similarity">
    <text evidence="3">Belongs to the hedgehog family.</text>
</comment>
<feature type="chain" id="PRO_0000058725" description="Sonic hedgehog protein">
    <location>
        <begin position="1" status="less than"/>
        <end position="121" status="greater than"/>
    </location>
</feature>
<feature type="binding site" evidence="2">
    <location>
        <position position="60"/>
    </location>
    <ligand>
        <name>Ca(2+)</name>
        <dbReference type="ChEBI" id="CHEBI:29108"/>
        <label>1</label>
    </ligand>
</feature>
<feature type="binding site" evidence="2">
    <location>
        <position position="61"/>
    </location>
    <ligand>
        <name>Ca(2+)</name>
        <dbReference type="ChEBI" id="CHEBI:29108"/>
        <label>1</label>
    </ligand>
</feature>
<feature type="binding site" evidence="2">
    <location>
        <position position="61"/>
    </location>
    <ligand>
        <name>Ca(2+)</name>
        <dbReference type="ChEBI" id="CHEBI:29108"/>
        <label>2</label>
    </ligand>
</feature>
<feature type="binding site" evidence="2">
    <location>
        <position position="76"/>
    </location>
    <ligand>
        <name>Ca(2+)</name>
        <dbReference type="ChEBI" id="CHEBI:29108"/>
        <label>1</label>
    </ligand>
</feature>
<feature type="binding site" evidence="2">
    <location>
        <position position="77"/>
    </location>
    <ligand>
        <name>Ca(2+)</name>
        <dbReference type="ChEBI" id="CHEBI:29108"/>
        <label>1</label>
    </ligand>
</feature>
<feature type="binding site" evidence="2">
    <location>
        <position position="77"/>
    </location>
    <ligand>
        <name>Ca(2+)</name>
        <dbReference type="ChEBI" id="CHEBI:29108"/>
        <label>2</label>
    </ligand>
</feature>
<feature type="binding site" evidence="2">
    <location>
        <position position="80"/>
    </location>
    <ligand>
        <name>Ca(2+)</name>
        <dbReference type="ChEBI" id="CHEBI:29108"/>
        <label>2</label>
    </ligand>
</feature>
<feature type="binding site" evidence="2">
    <location>
        <position position="82"/>
    </location>
    <ligand>
        <name>Ca(2+)</name>
        <dbReference type="ChEBI" id="CHEBI:29108"/>
        <label>2</label>
    </ligand>
</feature>
<feature type="binding site" evidence="2">
    <location>
        <position position="91"/>
    </location>
    <ligand>
        <name>Zn(2+)</name>
        <dbReference type="ChEBI" id="CHEBI:29105"/>
    </ligand>
</feature>
<feature type="binding site" evidence="2">
    <location>
        <position position="98"/>
    </location>
    <ligand>
        <name>Zn(2+)</name>
        <dbReference type="ChEBI" id="CHEBI:29105"/>
    </ligand>
</feature>
<feature type="non-consecutive residues" evidence="3">
    <location>
        <begin position="63"/>
        <end position="64"/>
    </location>
</feature>
<feature type="non-terminal residue">
    <location>
        <position position="1"/>
    </location>
</feature>
<feature type="non-terminal residue">
    <location>
        <position position="121"/>
    </location>
</feature>
<sequence>YGRRRHPKKLTPLAYKQFIPNVAEKTLGASGRYEGKITRNSERFKELTPNYNPDIIFKDEENTVMNHWPGVKLRVTEGWDEDGHHFEESLHYEGRAVDITTSDRDKSKYGTLSRLAVEAGF</sequence>
<name>SHH_DANAT</name>
<protein>
    <recommendedName>
        <fullName>Sonic hedgehog protein</fullName>
        <shortName>SHH</shortName>
    </recommendedName>
</protein>
<accession>O13238</accession>
<accession>O13193</accession>
<accession>O13198</accession>
<accession>O13237</accession>
<proteinExistence type="inferred from homology"/>
<reference key="1">
    <citation type="journal article" date="1996" name="Proc. Natl. Acad. Sci. U.S.A.">
        <title>Evolutionary analyses of hedgehog and Hoxd-10 genes in fish species closely related to the zebrafish.</title>
        <authorList>
            <person name="Zardoya R."/>
            <person name="Abouheif E."/>
            <person name="Meyer A."/>
        </authorList>
    </citation>
    <scope>NUCLEOTIDE SEQUENCE [GENOMIC DNA]</scope>
    <source>
        <tissue>Muscle</tissue>
    </source>
</reference>
<gene>
    <name type="primary">shh</name>
</gene>
<keyword id="KW-0068">Autocatalytic cleavage</keyword>
<keyword id="KW-0106">Calcium</keyword>
<keyword id="KW-1003">Cell membrane</keyword>
<keyword id="KW-0217">Developmental protein</keyword>
<keyword id="KW-0378">Hydrolase</keyword>
<keyword id="KW-0449">Lipoprotein</keyword>
<keyword id="KW-0472">Membrane</keyword>
<keyword id="KW-0479">Metal-binding</keyword>
<keyword id="KW-0564">Palmitate</keyword>
<keyword id="KW-0645">Protease</keyword>
<keyword id="KW-0964">Secreted</keyword>
<keyword id="KW-0862">Zinc</keyword>
<dbReference type="EMBL" id="U51348">
    <property type="protein sequence ID" value="AAB38568.1"/>
    <property type="molecule type" value="Genomic_DNA"/>
</dbReference>
<dbReference type="EMBL" id="U51367">
    <property type="protein sequence ID" value="AAB38585.1"/>
    <property type="molecule type" value="Genomic_DNA"/>
</dbReference>
<dbReference type="SMR" id="O13238"/>
<dbReference type="GO" id="GO:0005615">
    <property type="term" value="C:extracellular space"/>
    <property type="evidence" value="ECO:0007669"/>
    <property type="project" value="TreeGrafter"/>
</dbReference>
<dbReference type="GO" id="GO:0005886">
    <property type="term" value="C:plasma membrane"/>
    <property type="evidence" value="ECO:0007669"/>
    <property type="project" value="UniProtKB-SubCell"/>
</dbReference>
<dbReference type="GO" id="GO:0005509">
    <property type="term" value="F:calcium ion binding"/>
    <property type="evidence" value="ECO:0007669"/>
    <property type="project" value="TreeGrafter"/>
</dbReference>
<dbReference type="GO" id="GO:0005113">
    <property type="term" value="F:patched binding"/>
    <property type="evidence" value="ECO:0007669"/>
    <property type="project" value="TreeGrafter"/>
</dbReference>
<dbReference type="GO" id="GO:0008233">
    <property type="term" value="F:peptidase activity"/>
    <property type="evidence" value="ECO:0007669"/>
    <property type="project" value="UniProtKB-KW"/>
</dbReference>
<dbReference type="GO" id="GO:0048513">
    <property type="term" value="P:animal organ development"/>
    <property type="evidence" value="ECO:0007669"/>
    <property type="project" value="UniProtKB-ARBA"/>
</dbReference>
<dbReference type="GO" id="GO:0048468">
    <property type="term" value="P:cell development"/>
    <property type="evidence" value="ECO:0007669"/>
    <property type="project" value="UniProtKB-ARBA"/>
</dbReference>
<dbReference type="GO" id="GO:0001708">
    <property type="term" value="P:cell fate specification"/>
    <property type="evidence" value="ECO:0007669"/>
    <property type="project" value="TreeGrafter"/>
</dbReference>
<dbReference type="GO" id="GO:0007267">
    <property type="term" value="P:cell-cell signaling"/>
    <property type="evidence" value="ECO:0007669"/>
    <property type="project" value="InterPro"/>
</dbReference>
<dbReference type="GO" id="GO:0007417">
    <property type="term" value="P:central nervous system development"/>
    <property type="evidence" value="ECO:0007669"/>
    <property type="project" value="UniProtKB-ARBA"/>
</dbReference>
<dbReference type="GO" id="GO:0030182">
    <property type="term" value="P:neuron differentiation"/>
    <property type="evidence" value="ECO:0007669"/>
    <property type="project" value="UniProtKB-ARBA"/>
</dbReference>
<dbReference type="GO" id="GO:0006508">
    <property type="term" value="P:proteolysis"/>
    <property type="evidence" value="ECO:0007669"/>
    <property type="project" value="UniProtKB-KW"/>
</dbReference>
<dbReference type="GO" id="GO:0010468">
    <property type="term" value="P:regulation of gene expression"/>
    <property type="evidence" value="ECO:0007669"/>
    <property type="project" value="TreeGrafter"/>
</dbReference>
<dbReference type="GO" id="GO:0007224">
    <property type="term" value="P:smoothened signaling pathway"/>
    <property type="evidence" value="ECO:0007669"/>
    <property type="project" value="TreeGrafter"/>
</dbReference>
<dbReference type="GO" id="GO:0009888">
    <property type="term" value="P:tissue development"/>
    <property type="evidence" value="ECO:0007669"/>
    <property type="project" value="UniProtKB-ARBA"/>
</dbReference>
<dbReference type="Gene3D" id="3.30.1380.10">
    <property type="match status" value="1"/>
</dbReference>
<dbReference type="InterPro" id="IPR001657">
    <property type="entry name" value="Hedgehog"/>
</dbReference>
<dbReference type="InterPro" id="IPR009045">
    <property type="entry name" value="Hedgehog_sig/DD-Pept_Zn-bd_sf"/>
</dbReference>
<dbReference type="InterPro" id="IPR050387">
    <property type="entry name" value="Hedgehog_Signaling"/>
</dbReference>
<dbReference type="InterPro" id="IPR000320">
    <property type="entry name" value="Hedgehog_signalling_dom"/>
</dbReference>
<dbReference type="PANTHER" id="PTHR11889">
    <property type="entry name" value="HEDGEHOG"/>
    <property type="match status" value="1"/>
</dbReference>
<dbReference type="PANTHER" id="PTHR11889:SF36">
    <property type="entry name" value="SONIC HEDGEHOG PROTEIN"/>
    <property type="match status" value="1"/>
</dbReference>
<dbReference type="Pfam" id="PF01085">
    <property type="entry name" value="HH_signal"/>
    <property type="match status" value="1"/>
</dbReference>
<dbReference type="PRINTS" id="PR00632">
    <property type="entry name" value="SONICHHOG"/>
</dbReference>
<dbReference type="SUPFAM" id="SSF55166">
    <property type="entry name" value="Hedgehog/DD-peptidase"/>
    <property type="match status" value="1"/>
</dbReference>